<feature type="chain" id="PRO_1000122162" description="Integration host factor subunit alpha">
    <location>
        <begin position="1"/>
        <end position="99"/>
    </location>
</feature>
<feature type="region of interest" description="Disordered" evidence="2">
    <location>
        <begin position="49"/>
        <end position="75"/>
    </location>
</feature>
<dbReference type="EMBL" id="AM933173">
    <property type="protein sequence ID" value="CAR37635.1"/>
    <property type="molecule type" value="Genomic_DNA"/>
</dbReference>
<dbReference type="RefSeq" id="WP_001229266.1">
    <property type="nucleotide sequence ID" value="NC_011274.1"/>
</dbReference>
<dbReference type="SMR" id="B5RAW7"/>
<dbReference type="GeneID" id="92828695"/>
<dbReference type="KEGG" id="seg:SG1778"/>
<dbReference type="HOGENOM" id="CLU_105066_1_3_6"/>
<dbReference type="Proteomes" id="UP000008321">
    <property type="component" value="Chromosome"/>
</dbReference>
<dbReference type="GO" id="GO:0005829">
    <property type="term" value="C:cytosol"/>
    <property type="evidence" value="ECO:0007669"/>
    <property type="project" value="TreeGrafter"/>
</dbReference>
<dbReference type="GO" id="GO:0003677">
    <property type="term" value="F:DNA binding"/>
    <property type="evidence" value="ECO:0007669"/>
    <property type="project" value="UniProtKB-UniRule"/>
</dbReference>
<dbReference type="GO" id="GO:0030527">
    <property type="term" value="F:structural constituent of chromatin"/>
    <property type="evidence" value="ECO:0007669"/>
    <property type="project" value="InterPro"/>
</dbReference>
<dbReference type="GO" id="GO:0006310">
    <property type="term" value="P:DNA recombination"/>
    <property type="evidence" value="ECO:0007669"/>
    <property type="project" value="UniProtKB-UniRule"/>
</dbReference>
<dbReference type="GO" id="GO:0009893">
    <property type="term" value="P:positive regulation of metabolic process"/>
    <property type="evidence" value="ECO:0007669"/>
    <property type="project" value="UniProtKB-ARBA"/>
</dbReference>
<dbReference type="GO" id="GO:0006355">
    <property type="term" value="P:regulation of DNA-templated transcription"/>
    <property type="evidence" value="ECO:0007669"/>
    <property type="project" value="UniProtKB-UniRule"/>
</dbReference>
<dbReference type="GO" id="GO:0006417">
    <property type="term" value="P:regulation of translation"/>
    <property type="evidence" value="ECO:0007669"/>
    <property type="project" value="UniProtKB-UniRule"/>
</dbReference>
<dbReference type="CDD" id="cd13835">
    <property type="entry name" value="IHF_A"/>
    <property type="match status" value="1"/>
</dbReference>
<dbReference type="FunFam" id="4.10.520.10:FF:000002">
    <property type="entry name" value="Integration host factor subunit alpha"/>
    <property type="match status" value="1"/>
</dbReference>
<dbReference type="Gene3D" id="4.10.520.10">
    <property type="entry name" value="IHF-like DNA-binding proteins"/>
    <property type="match status" value="1"/>
</dbReference>
<dbReference type="HAMAP" id="MF_00380">
    <property type="entry name" value="IHF_alpha"/>
    <property type="match status" value="1"/>
</dbReference>
<dbReference type="InterPro" id="IPR000119">
    <property type="entry name" value="Hist_DNA-bd"/>
</dbReference>
<dbReference type="InterPro" id="IPR020816">
    <property type="entry name" value="Histone-like_DNA-bd_CS"/>
</dbReference>
<dbReference type="InterPro" id="IPR010992">
    <property type="entry name" value="IHF-like_DNA-bd_dom_sf"/>
</dbReference>
<dbReference type="InterPro" id="IPR005684">
    <property type="entry name" value="IHF_alpha"/>
</dbReference>
<dbReference type="NCBIfam" id="TIGR00987">
    <property type="entry name" value="himA"/>
    <property type="match status" value="1"/>
</dbReference>
<dbReference type="NCBIfam" id="NF001401">
    <property type="entry name" value="PRK00285.1"/>
    <property type="match status" value="1"/>
</dbReference>
<dbReference type="PANTHER" id="PTHR33175">
    <property type="entry name" value="DNA-BINDING PROTEIN HU"/>
    <property type="match status" value="1"/>
</dbReference>
<dbReference type="PANTHER" id="PTHR33175:SF2">
    <property type="entry name" value="INTEGRATION HOST FACTOR SUBUNIT ALPHA"/>
    <property type="match status" value="1"/>
</dbReference>
<dbReference type="Pfam" id="PF00216">
    <property type="entry name" value="Bac_DNA_binding"/>
    <property type="match status" value="1"/>
</dbReference>
<dbReference type="PRINTS" id="PR01727">
    <property type="entry name" value="DNABINDINGHU"/>
</dbReference>
<dbReference type="SMART" id="SM00411">
    <property type="entry name" value="BHL"/>
    <property type="match status" value="1"/>
</dbReference>
<dbReference type="SUPFAM" id="SSF47729">
    <property type="entry name" value="IHF-like DNA-binding proteins"/>
    <property type="match status" value="1"/>
</dbReference>
<dbReference type="PROSITE" id="PS00045">
    <property type="entry name" value="HISTONE_LIKE"/>
    <property type="match status" value="1"/>
</dbReference>
<protein>
    <recommendedName>
        <fullName evidence="1">Integration host factor subunit alpha</fullName>
        <shortName evidence="1">IHF-alpha</shortName>
    </recommendedName>
</protein>
<organism>
    <name type="scientific">Salmonella gallinarum (strain 287/91 / NCTC 13346)</name>
    <dbReference type="NCBI Taxonomy" id="550538"/>
    <lineage>
        <taxon>Bacteria</taxon>
        <taxon>Pseudomonadati</taxon>
        <taxon>Pseudomonadota</taxon>
        <taxon>Gammaproteobacteria</taxon>
        <taxon>Enterobacterales</taxon>
        <taxon>Enterobacteriaceae</taxon>
        <taxon>Salmonella</taxon>
    </lineage>
</organism>
<gene>
    <name evidence="1" type="primary">ihfA</name>
    <name evidence="1" type="synonym">himA</name>
    <name type="ordered locus">SG1778</name>
</gene>
<keyword id="KW-0233">DNA recombination</keyword>
<keyword id="KW-0238">DNA-binding</keyword>
<keyword id="KW-0804">Transcription</keyword>
<keyword id="KW-0805">Transcription regulation</keyword>
<keyword id="KW-0810">Translation regulation</keyword>
<comment type="function">
    <text evidence="1">This protein is one of the two subunits of integration host factor, a specific DNA-binding protein that functions in genetic recombination as well as in transcriptional and translational control.</text>
</comment>
<comment type="subunit">
    <text evidence="1">Heterodimer of an alpha and a beta chain.</text>
</comment>
<comment type="similarity">
    <text evidence="1">Belongs to the bacterial histone-like protein family.</text>
</comment>
<accession>B5RAW7</accession>
<reference key="1">
    <citation type="journal article" date="2008" name="Genome Res.">
        <title>Comparative genome analysis of Salmonella enteritidis PT4 and Salmonella gallinarum 287/91 provides insights into evolutionary and host adaptation pathways.</title>
        <authorList>
            <person name="Thomson N.R."/>
            <person name="Clayton D.J."/>
            <person name="Windhorst D."/>
            <person name="Vernikos G."/>
            <person name="Davidson S."/>
            <person name="Churcher C."/>
            <person name="Quail M.A."/>
            <person name="Stevens M."/>
            <person name="Jones M.A."/>
            <person name="Watson M."/>
            <person name="Barron A."/>
            <person name="Layton A."/>
            <person name="Pickard D."/>
            <person name="Kingsley R.A."/>
            <person name="Bignell A."/>
            <person name="Clark L."/>
            <person name="Harris B."/>
            <person name="Ormond D."/>
            <person name="Abdellah Z."/>
            <person name="Brooks K."/>
            <person name="Cherevach I."/>
            <person name="Chillingworth T."/>
            <person name="Woodward J."/>
            <person name="Norberczak H."/>
            <person name="Lord A."/>
            <person name="Arrowsmith C."/>
            <person name="Jagels K."/>
            <person name="Moule S."/>
            <person name="Mungall K."/>
            <person name="Saunders M."/>
            <person name="Whitehead S."/>
            <person name="Chabalgoity J.A."/>
            <person name="Maskell D."/>
            <person name="Humphreys T."/>
            <person name="Roberts M."/>
            <person name="Barrow P.A."/>
            <person name="Dougan G."/>
            <person name="Parkhill J."/>
        </authorList>
    </citation>
    <scope>NUCLEOTIDE SEQUENCE [LARGE SCALE GENOMIC DNA]</scope>
    <source>
        <strain>287/91 / NCTC 13346</strain>
    </source>
</reference>
<evidence type="ECO:0000255" key="1">
    <source>
        <dbReference type="HAMAP-Rule" id="MF_00380"/>
    </source>
</evidence>
<evidence type="ECO:0000256" key="2">
    <source>
        <dbReference type="SAM" id="MobiDB-lite"/>
    </source>
</evidence>
<sequence>MALTKAEMSEYLFDKLGLSKRDAKELVELFFEEIRRALENGEQVKLSGFGNFDLRDKNQRPGRNPKTGEDIPITARRVVTFRPGQKLKSRVENASPKEE</sequence>
<name>IHFA_SALG2</name>
<proteinExistence type="inferred from homology"/>